<proteinExistence type="inferred from homology"/>
<sequence length="358" mass="40303">MATDDDSFPWDQDSILSRDLLSASSLQLCYENLNRSCVRSPYSPGSRLILYAVFGFGAVLAVCGNLLVMTSILHFRQLHSPANFLVASLACADLLVGLTVMPFSMVRSVEGCWYFGNTYCKFHSCFEGSFCYSSLFHLCFISLDRYIAVSDPLIYPTRFTASISGKCITFSWLLSIIYSFSLLYTGANEAGLEDLVSALTCVGGCQVAVNQSWVFINFLLFLVPALVMMTVYSKIFLIAKQQAQNIEKMSKQTARASESYKDRVAKRERKAAKTLGIAVAAFLLSWLPYFIDSIIDAFLGFITPTYMYEILVWIVYYNSAMNPLIYAFFYPWFRKAIKLIVTGKILRENSSTINLFPE</sequence>
<protein>
    <recommendedName>
        <fullName>Trace amine-associated receptor 7c</fullName>
        <shortName>TaR-7c</shortName>
        <shortName>Trace amine receptor 7c</shortName>
    </recommendedName>
</protein>
<comment type="function">
    <text evidence="3">Olfactory receptor specific for N,N-dimethylalkylamines trace amines. Trace amine compounds are enriched in animal body fluids and act on trace amine-associated receptors (TAARs) to elicit both intraspecific and interspecific innate behaviors. Ligand-binding causes a conformation change that triggers signaling via G(s)-class of G alpha proteins (GNAL or GNAS).</text>
</comment>
<comment type="subcellular location">
    <subcellularLocation>
        <location evidence="2">Cell membrane</location>
        <topology evidence="4">Multi-pass membrane protein</topology>
    </subcellularLocation>
</comment>
<comment type="domain">
    <text evidence="1">In addition to the well known disulfide bond common to G-protein coupled receptor 1 family, trace amine-associated receptors (TAARs) contain an unique disulfide bond (Cys-37-Cys-201) connecting the N-terminus to the extracellular Loop 2 (ECL2), which is required for agonist-induced receptor activation.</text>
</comment>
<comment type="similarity">
    <text evidence="5">Belongs to the G-protein coupled receptor 1 family.</text>
</comment>
<dbReference type="EMBL" id="AY702320">
    <property type="protein sequence ID" value="AAV70132.1"/>
    <property type="molecule type" value="Genomic_DNA"/>
</dbReference>
<dbReference type="RefSeq" id="NP_001009975.1">
    <property type="nucleotide sequence ID" value="NM_001009975.1"/>
</dbReference>
<dbReference type="SMR" id="Q5QD21"/>
<dbReference type="FunCoup" id="Q5QD21">
    <property type="interactions" value="32"/>
</dbReference>
<dbReference type="STRING" id="10116.ENSRNOP00000041914"/>
<dbReference type="GlyCosmos" id="Q5QD21">
    <property type="glycosylation" value="1 site, No reported glycans"/>
</dbReference>
<dbReference type="GlyGen" id="Q5QD21">
    <property type="glycosylation" value="1 site"/>
</dbReference>
<dbReference type="PaxDb" id="10116-ENSRNOP00000041914"/>
<dbReference type="Ensembl" id="ENSRNOT00000050763.3">
    <property type="protein sequence ID" value="ENSRNOP00000041914.2"/>
    <property type="gene ID" value="ENSRNOG00000071165.1"/>
</dbReference>
<dbReference type="GeneID" id="494535"/>
<dbReference type="KEGG" id="rno:494535"/>
<dbReference type="AGR" id="RGD:1359258"/>
<dbReference type="CTD" id="494535"/>
<dbReference type="RGD" id="1359258">
    <property type="gene designation" value="Taar7c"/>
</dbReference>
<dbReference type="eggNOG" id="KOG3656">
    <property type="taxonomic scope" value="Eukaryota"/>
</dbReference>
<dbReference type="GeneTree" id="ENSGT00940000160273"/>
<dbReference type="HOGENOM" id="CLU_009579_11_0_1"/>
<dbReference type="InParanoid" id="Q5QD21"/>
<dbReference type="OMA" id="MNESCYK"/>
<dbReference type="OrthoDB" id="49650at9989"/>
<dbReference type="TreeFam" id="TF343107"/>
<dbReference type="PRO" id="PR:Q5QD21"/>
<dbReference type="Proteomes" id="UP000002494">
    <property type="component" value="Chromosome 1"/>
</dbReference>
<dbReference type="GO" id="GO:0005886">
    <property type="term" value="C:plasma membrane"/>
    <property type="evidence" value="ECO:0000318"/>
    <property type="project" value="GO_Central"/>
</dbReference>
<dbReference type="GO" id="GO:0001594">
    <property type="term" value="F:trace-amine receptor activity"/>
    <property type="evidence" value="ECO:0000318"/>
    <property type="project" value="GO_Central"/>
</dbReference>
<dbReference type="GO" id="GO:0007186">
    <property type="term" value="P:G protein-coupled receptor signaling pathway"/>
    <property type="evidence" value="ECO:0000318"/>
    <property type="project" value="GO_Central"/>
</dbReference>
<dbReference type="FunFam" id="1.20.1070.10:FF:000030">
    <property type="entry name" value="trace amine-associated receptor 1"/>
    <property type="match status" value="1"/>
</dbReference>
<dbReference type="Gene3D" id="1.20.1070.10">
    <property type="entry name" value="Rhodopsin 7-helix transmembrane proteins"/>
    <property type="match status" value="1"/>
</dbReference>
<dbReference type="InterPro" id="IPR000276">
    <property type="entry name" value="GPCR_Rhodpsn"/>
</dbReference>
<dbReference type="InterPro" id="IPR017452">
    <property type="entry name" value="GPCR_Rhodpsn_7TM"/>
</dbReference>
<dbReference type="InterPro" id="IPR050569">
    <property type="entry name" value="TAAR"/>
</dbReference>
<dbReference type="InterPro" id="IPR009132">
    <property type="entry name" value="TAAR_fam"/>
</dbReference>
<dbReference type="PANTHER" id="PTHR24249">
    <property type="entry name" value="HISTAMINE RECEPTOR-RELATED G-PROTEIN COUPLED RECEPTOR"/>
    <property type="match status" value="1"/>
</dbReference>
<dbReference type="PANTHER" id="PTHR24249:SF78">
    <property type="entry name" value="TRACE AMINE-ASSOCIATED RECEPTOR 7A-RELATED"/>
    <property type="match status" value="1"/>
</dbReference>
<dbReference type="Pfam" id="PF00001">
    <property type="entry name" value="7tm_1"/>
    <property type="match status" value="1"/>
</dbReference>
<dbReference type="PRINTS" id="PR00237">
    <property type="entry name" value="GPCRRHODOPSN"/>
</dbReference>
<dbReference type="PRINTS" id="PR01830">
    <property type="entry name" value="TRACEAMINER"/>
</dbReference>
<dbReference type="SMART" id="SM01381">
    <property type="entry name" value="7TM_GPCR_Srsx"/>
    <property type="match status" value="1"/>
</dbReference>
<dbReference type="SUPFAM" id="SSF81321">
    <property type="entry name" value="Family A G protein-coupled receptor-like"/>
    <property type="match status" value="1"/>
</dbReference>
<dbReference type="PROSITE" id="PS00237">
    <property type="entry name" value="G_PROTEIN_RECEP_F1_1"/>
    <property type="match status" value="1"/>
</dbReference>
<dbReference type="PROSITE" id="PS50262">
    <property type="entry name" value="G_PROTEIN_RECEP_F1_2"/>
    <property type="match status" value="1"/>
</dbReference>
<name>TAA7C_RAT</name>
<keyword id="KW-1003">Cell membrane</keyword>
<keyword id="KW-1015">Disulfide bond</keyword>
<keyword id="KW-0297">G-protein coupled receptor</keyword>
<keyword id="KW-0325">Glycoprotein</keyword>
<keyword id="KW-0472">Membrane</keyword>
<keyword id="KW-0675">Receptor</keyword>
<keyword id="KW-1185">Reference proteome</keyword>
<keyword id="KW-0807">Transducer</keyword>
<keyword id="KW-0812">Transmembrane</keyword>
<keyword id="KW-1133">Transmembrane helix</keyword>
<organism>
    <name type="scientific">Rattus norvegicus</name>
    <name type="common">Rat</name>
    <dbReference type="NCBI Taxonomy" id="10116"/>
    <lineage>
        <taxon>Eukaryota</taxon>
        <taxon>Metazoa</taxon>
        <taxon>Chordata</taxon>
        <taxon>Craniata</taxon>
        <taxon>Vertebrata</taxon>
        <taxon>Euteleostomi</taxon>
        <taxon>Mammalia</taxon>
        <taxon>Eutheria</taxon>
        <taxon>Euarchontoglires</taxon>
        <taxon>Glires</taxon>
        <taxon>Rodentia</taxon>
        <taxon>Myomorpha</taxon>
        <taxon>Muroidea</taxon>
        <taxon>Muridae</taxon>
        <taxon>Murinae</taxon>
        <taxon>Rattus</taxon>
    </lineage>
</organism>
<evidence type="ECO:0000250" key="1">
    <source>
        <dbReference type="UniProtKB" id="Q5QD04"/>
    </source>
</evidence>
<evidence type="ECO:0000250" key="2">
    <source>
        <dbReference type="UniProtKB" id="Q923X5"/>
    </source>
</evidence>
<evidence type="ECO:0000250" key="3">
    <source>
        <dbReference type="UniProtKB" id="Q923Y4"/>
    </source>
</evidence>
<evidence type="ECO:0000255" key="4"/>
<evidence type="ECO:0000255" key="5">
    <source>
        <dbReference type="PROSITE-ProRule" id="PRU00521"/>
    </source>
</evidence>
<evidence type="ECO:0000312" key="6">
    <source>
        <dbReference type="RGD" id="1359258"/>
    </source>
</evidence>
<accession>Q5QD21</accession>
<gene>
    <name evidence="6" type="primary">Taar7c</name>
</gene>
<reference key="1">
    <citation type="journal article" date="2005" name="Genomics">
        <title>Trace amine-associated receptors form structurally and functionally distinct subfamilies of novel G protein-coupled receptors.</title>
        <authorList>
            <person name="Lindemann L."/>
            <person name="Ebeling M."/>
            <person name="Kratochwil N.A."/>
            <person name="Bunzow J.R."/>
            <person name="Grandy D.K."/>
            <person name="Hoener M.C."/>
        </authorList>
    </citation>
    <scope>NUCLEOTIDE SEQUENCE [GENOMIC DNA]</scope>
    <source>
        <strain>WIST/Crl</strain>
    </source>
</reference>
<feature type="chain" id="PRO_0000070166" description="Trace amine-associated receptor 7c">
    <location>
        <begin position="1"/>
        <end position="358"/>
    </location>
</feature>
<feature type="topological domain" description="Extracellular" evidence="4">
    <location>
        <begin position="1"/>
        <end position="47"/>
    </location>
</feature>
<feature type="transmembrane region" description="Helical; Name=1" evidence="4">
    <location>
        <begin position="48"/>
        <end position="68"/>
    </location>
</feature>
<feature type="topological domain" description="Cytoplasmic" evidence="4">
    <location>
        <begin position="69"/>
        <end position="83"/>
    </location>
</feature>
<feature type="transmembrane region" description="Helical; Name=2" evidence="4">
    <location>
        <begin position="84"/>
        <end position="104"/>
    </location>
</feature>
<feature type="topological domain" description="Extracellular" evidence="4">
    <location>
        <begin position="105"/>
        <end position="125"/>
    </location>
</feature>
<feature type="transmembrane region" description="Helical; Name=3" evidence="4">
    <location>
        <begin position="126"/>
        <end position="148"/>
    </location>
</feature>
<feature type="topological domain" description="Cytoplasmic" evidence="4">
    <location>
        <begin position="149"/>
        <end position="166"/>
    </location>
</feature>
<feature type="transmembrane region" description="Helical; Name=4" evidence="4">
    <location>
        <begin position="167"/>
        <end position="187"/>
    </location>
</feature>
<feature type="topological domain" description="Extracellular" evidence="4">
    <location>
        <begin position="188"/>
        <end position="211"/>
    </location>
</feature>
<feature type="transmembrane region" description="Helical; Name=5" evidence="4">
    <location>
        <begin position="212"/>
        <end position="232"/>
    </location>
</feature>
<feature type="topological domain" description="Cytoplasmic" evidence="4">
    <location>
        <begin position="233"/>
        <end position="274"/>
    </location>
</feature>
<feature type="transmembrane region" description="Helical; Name=6" evidence="4">
    <location>
        <begin position="275"/>
        <end position="295"/>
    </location>
</feature>
<feature type="topological domain" description="Extracellular" evidence="4">
    <location>
        <begin position="296"/>
        <end position="309"/>
    </location>
</feature>
<feature type="transmembrane region" description="Helical; Name=7" evidence="4">
    <location>
        <begin position="310"/>
        <end position="332"/>
    </location>
</feature>
<feature type="topological domain" description="Cytoplasmic" evidence="4">
    <location>
        <begin position="333"/>
        <end position="358"/>
    </location>
</feature>
<feature type="glycosylation site" description="N-linked (GlcNAc...) asparagine" evidence="4">
    <location>
        <position position="34"/>
    </location>
</feature>
<feature type="disulfide bond" evidence="1">
    <location>
        <begin position="37"/>
        <end position="201"/>
    </location>
</feature>
<feature type="disulfide bond" evidence="5">
    <location>
        <begin position="120"/>
        <end position="205"/>
    </location>
</feature>